<accession>Q4U3U4</accession>
<name>QAY_NEUTR</name>
<dbReference type="EMBL" id="DQ015973">
    <property type="protein sequence ID" value="AAY41163.1"/>
    <property type="molecule type" value="Genomic_DNA"/>
</dbReference>
<dbReference type="SMR" id="Q4U3U4"/>
<dbReference type="GlyCosmos" id="Q4U3U4">
    <property type="glycosylation" value="1 site, No reported glycans"/>
</dbReference>
<dbReference type="GO" id="GO:0016020">
    <property type="term" value="C:membrane"/>
    <property type="evidence" value="ECO:0007669"/>
    <property type="project" value="UniProtKB-SubCell"/>
</dbReference>
<dbReference type="GO" id="GO:0005351">
    <property type="term" value="F:carbohydrate:proton symporter activity"/>
    <property type="evidence" value="ECO:0007669"/>
    <property type="project" value="TreeGrafter"/>
</dbReference>
<dbReference type="GO" id="GO:0019630">
    <property type="term" value="P:quinate metabolic process"/>
    <property type="evidence" value="ECO:0007669"/>
    <property type="project" value="UniProtKB-KW"/>
</dbReference>
<dbReference type="CDD" id="cd17356">
    <property type="entry name" value="MFS_HXT"/>
    <property type="match status" value="1"/>
</dbReference>
<dbReference type="FunFam" id="1.20.1250.20:FF:000026">
    <property type="entry name" value="MFS quinate transporter QutD"/>
    <property type="match status" value="1"/>
</dbReference>
<dbReference type="Gene3D" id="1.20.1250.20">
    <property type="entry name" value="MFS general substrate transporter like domains"/>
    <property type="match status" value="1"/>
</dbReference>
<dbReference type="InterPro" id="IPR020846">
    <property type="entry name" value="MFS_dom"/>
</dbReference>
<dbReference type="InterPro" id="IPR005828">
    <property type="entry name" value="MFS_sugar_transport-like"/>
</dbReference>
<dbReference type="InterPro" id="IPR050360">
    <property type="entry name" value="MFS_Sugar_Transporters"/>
</dbReference>
<dbReference type="InterPro" id="IPR036259">
    <property type="entry name" value="MFS_trans_sf"/>
</dbReference>
<dbReference type="InterPro" id="IPR003663">
    <property type="entry name" value="Sugar/inositol_transpt"/>
</dbReference>
<dbReference type="InterPro" id="IPR005829">
    <property type="entry name" value="Sugar_transporter_CS"/>
</dbReference>
<dbReference type="NCBIfam" id="TIGR00879">
    <property type="entry name" value="SP"/>
    <property type="match status" value="1"/>
</dbReference>
<dbReference type="PANTHER" id="PTHR48022:SF34">
    <property type="entry name" value="MAJOR FACILITATOR SUPERFAMILY (MFS) PROFILE DOMAIN-CONTAINING PROTEIN-RELATED"/>
    <property type="match status" value="1"/>
</dbReference>
<dbReference type="PANTHER" id="PTHR48022">
    <property type="entry name" value="PLASTIDIC GLUCOSE TRANSPORTER 4"/>
    <property type="match status" value="1"/>
</dbReference>
<dbReference type="Pfam" id="PF00083">
    <property type="entry name" value="Sugar_tr"/>
    <property type="match status" value="1"/>
</dbReference>
<dbReference type="PRINTS" id="PR00171">
    <property type="entry name" value="SUGRTRNSPORT"/>
</dbReference>
<dbReference type="SUPFAM" id="SSF103473">
    <property type="entry name" value="MFS general substrate transporter"/>
    <property type="match status" value="1"/>
</dbReference>
<dbReference type="PROSITE" id="PS50850">
    <property type="entry name" value="MFS"/>
    <property type="match status" value="1"/>
</dbReference>
<dbReference type="PROSITE" id="PS00216">
    <property type="entry name" value="SUGAR_TRANSPORT_1"/>
    <property type="match status" value="1"/>
</dbReference>
<dbReference type="PROSITE" id="PS00217">
    <property type="entry name" value="SUGAR_TRANSPORT_2"/>
    <property type="match status" value="1"/>
</dbReference>
<feature type="chain" id="PRO_0000260164" description="Quinate permease">
    <location>
        <begin position="1"/>
        <end position="536"/>
    </location>
</feature>
<feature type="topological domain" description="Cytoplasmic" evidence="1">
    <location>
        <begin position="1"/>
        <end position="26"/>
    </location>
</feature>
<feature type="transmembrane region" description="Helical; Name=1" evidence="1">
    <location>
        <begin position="27"/>
        <end position="47"/>
    </location>
</feature>
<feature type="topological domain" description="Extracellular" evidence="1">
    <location>
        <begin position="48"/>
        <end position="74"/>
    </location>
</feature>
<feature type="transmembrane region" description="Helical; Name=2" evidence="1">
    <location>
        <begin position="75"/>
        <end position="95"/>
    </location>
</feature>
<feature type="topological domain" description="Cytoplasmic" evidence="1">
    <location>
        <begin position="96"/>
        <end position="98"/>
    </location>
</feature>
<feature type="transmembrane region" description="Helical; Name=3" evidence="1">
    <location>
        <begin position="99"/>
        <end position="119"/>
    </location>
</feature>
<feature type="topological domain" description="Extracellular" evidence="1">
    <location>
        <begin position="120"/>
        <end position="131"/>
    </location>
</feature>
<feature type="transmembrane region" description="Helical; Name=4" evidence="1">
    <location>
        <begin position="132"/>
        <end position="152"/>
    </location>
</feature>
<feature type="topological domain" description="Cytoplasmic" evidence="1">
    <location>
        <begin position="153"/>
        <end position="160"/>
    </location>
</feature>
<feature type="transmembrane region" description="Helical; Name=5" evidence="1">
    <location>
        <begin position="161"/>
        <end position="181"/>
    </location>
</feature>
<feature type="topological domain" description="Extracellular" evidence="1">
    <location>
        <begin position="182"/>
        <end position="195"/>
    </location>
</feature>
<feature type="transmembrane region" description="Helical; Name=6" evidence="1">
    <location>
        <begin position="196"/>
        <end position="216"/>
    </location>
</feature>
<feature type="topological domain" description="Cytoplasmic" evidence="1">
    <location>
        <begin position="217"/>
        <end position="285"/>
    </location>
</feature>
<feature type="transmembrane region" description="Helical; Name=7" evidence="1">
    <location>
        <begin position="286"/>
        <end position="306"/>
    </location>
</feature>
<feature type="topological domain" description="Extracellular" evidence="1">
    <location>
        <begin position="307"/>
        <end position="327"/>
    </location>
</feature>
<feature type="transmembrane region" description="Helical; Name=8" evidence="1">
    <location>
        <begin position="328"/>
        <end position="349"/>
    </location>
</feature>
<feature type="topological domain" description="Cytoplasmic" evidence="1">
    <location>
        <begin position="350"/>
        <end position="352"/>
    </location>
</feature>
<feature type="transmembrane region" description="Helical; Name=9" evidence="1">
    <location>
        <begin position="353"/>
        <end position="373"/>
    </location>
</feature>
<feature type="topological domain" description="Extracellular" evidence="1">
    <location>
        <begin position="374"/>
        <end position="389"/>
    </location>
</feature>
<feature type="transmembrane region" description="Helical; Name=10" evidence="1">
    <location>
        <begin position="390"/>
        <end position="410"/>
    </location>
</feature>
<feature type="topological domain" description="Cytoplasmic" evidence="1">
    <location>
        <begin position="411"/>
        <end position="435"/>
    </location>
</feature>
<feature type="transmembrane region" description="Helical; Name=11" evidence="1">
    <location>
        <begin position="436"/>
        <end position="456"/>
    </location>
</feature>
<feature type="topological domain" description="Extracellular" evidence="1">
    <location>
        <begin position="457"/>
        <end position="458"/>
    </location>
</feature>
<feature type="transmembrane region" description="Helical; Name=12" evidence="1">
    <location>
        <begin position="459"/>
        <end position="479"/>
    </location>
</feature>
<feature type="topological domain" description="Cytoplasmic" evidence="1">
    <location>
        <begin position="480"/>
        <end position="536"/>
    </location>
</feature>
<feature type="region of interest" description="Disordered" evidence="2">
    <location>
        <begin position="516"/>
        <end position="536"/>
    </location>
</feature>
<feature type="compositionally biased region" description="Basic and acidic residues" evidence="2">
    <location>
        <begin position="516"/>
        <end position="530"/>
    </location>
</feature>
<feature type="glycosylation site" description="N-linked (GlcNAc...) asparagine" evidence="1">
    <location>
        <position position="184"/>
    </location>
</feature>
<organism>
    <name type="scientific">Neurospora terricola</name>
    <dbReference type="NCBI Taxonomy" id="88718"/>
    <lineage>
        <taxon>Eukaryota</taxon>
        <taxon>Fungi</taxon>
        <taxon>Dikarya</taxon>
        <taxon>Ascomycota</taxon>
        <taxon>Pezizomycotina</taxon>
        <taxon>Sordariomycetes</taxon>
        <taxon>Sordariomycetidae</taxon>
        <taxon>Sordariales</taxon>
        <taxon>Sordariaceae</taxon>
        <taxon>Neurospora</taxon>
    </lineage>
</organism>
<proteinExistence type="inferred from homology"/>
<sequence>MTLLALKEDRPTPKAVYNWRVYTCAAIASFASCMIGYDSAFIGTTLALPSFKKEFDFASYTPGALALLQSNIVSVYQAGAFFGSLFAFATSYFLGRRKSLIAFSVVFIIGAAIMLAADGQGRGIAPIIAGRVLAGIGVGGASNMVPIYISELAPPAVRGRLVGIYELGWQIGGLVGFWINYGVNTTMAPTRSQWLIPFAVQLIPAGLLFLGSFWIPESPRWLFANGKREEAMKVLCWMRNLEPTDRYIVEEVSYIDADLERYAREVGKGFWKPFLSLKQRKVQWRFFLGGMLFLWQNGSGINAINYYSPTVFRSIGITGTNTGFLTTGIFGVVKMVLTIVWLLWLVDLVGRRRMLFIGATGGSLCMWFIGAYIKIAGPGSTKAEDAKLTSGGIAAIFFFYLWTAFYTPSWNGTPWVINSEMFDQNTRSLGQASAAANNWFWNFIISRFTPQMFIKMEYGVYFFFASLMLLSIVFIYFFIPETKSIPLEAMDRLFEIKPVHNANKILMAELNFDRNPEREESSLDEKDRVTQTENAV</sequence>
<keyword id="KW-0325">Glycoprotein</keyword>
<keyword id="KW-0472">Membrane</keyword>
<keyword id="KW-0672">Quinate metabolism</keyword>
<keyword id="KW-0812">Transmembrane</keyword>
<keyword id="KW-1133">Transmembrane helix</keyword>
<keyword id="KW-0813">Transport</keyword>
<comment type="subcellular location">
    <subcellularLocation>
        <location>Membrane</location>
        <topology>Multi-pass membrane protein</topology>
    </subcellularLocation>
</comment>
<comment type="similarity">
    <text evidence="3">Belongs to the major facilitator superfamily. Sugar transporter (TC 2.A.1.1) family.</text>
</comment>
<protein>
    <recommendedName>
        <fullName>Quinate permease</fullName>
    </recommendedName>
    <alternativeName>
        <fullName>Quinate transporter</fullName>
    </alternativeName>
</protein>
<evidence type="ECO:0000255" key="1"/>
<evidence type="ECO:0000256" key="2">
    <source>
        <dbReference type="SAM" id="MobiDB-lite"/>
    </source>
</evidence>
<evidence type="ECO:0000305" key="3"/>
<gene>
    <name type="primary">qa-y</name>
</gene>
<reference key="1">
    <citation type="submission" date="2005-04" db="EMBL/GenBank/DDBJ databases">
        <title>Sequence analysis of genes of the quinic acid (qa) cluster of two homothallic Neurospora species.</title>
        <authorList>
            <person name="Arnett D.R."/>
            <person name="Asch D.K."/>
        </authorList>
    </citation>
    <scope>NUCLEOTIDE SEQUENCE [GENOMIC DNA]</scope>
</reference>